<proteinExistence type="evidence at transcript level"/>
<reference key="1">
    <citation type="journal article" date="1995" name="Am. J. Physiol.">
        <title>Cloning, functional expression, and characterization of a PKA-activated gastric Cl-channel.</title>
        <authorList>
            <person name="Malinowska D.H."/>
            <person name="Kupert E.Y."/>
            <person name="Bahinski A."/>
            <person name="Sherry A.M."/>
            <person name="Cuppoletti J."/>
        </authorList>
    </citation>
    <scope>NUCLEOTIDE SEQUENCE [MRNA]</scope>
    <source>
        <strain>New Zealand white</strain>
        <tissue>Gastric mucosa</tissue>
    </source>
</reference>
<protein>
    <recommendedName>
        <fullName>Chloride channel protein 2</fullName>
        <shortName>ClC-2</shortName>
    </recommendedName>
    <alternativeName>
        <fullName>PKA-activated chloride channel</fullName>
    </alternativeName>
</protein>
<feature type="chain" id="PRO_0000094435" description="Chloride channel protein 2">
    <location>
        <begin position="1"/>
        <end position="898"/>
    </location>
</feature>
<feature type="topological domain" description="Cytoplasmic" evidence="1">
    <location>
        <begin position="1"/>
        <end position="90"/>
    </location>
</feature>
<feature type="transmembrane region" description="Helical" evidence="1">
    <location>
        <begin position="91"/>
        <end position="124"/>
    </location>
</feature>
<feature type="transmembrane region" description="Helical" evidence="1">
    <location>
        <begin position="133"/>
        <end position="158"/>
    </location>
</feature>
<feature type="intramembrane region" description="Helical" evidence="6">
    <location>
        <begin position="167"/>
        <end position="174"/>
    </location>
</feature>
<feature type="transmembrane region" description="Helical" evidence="1">
    <location>
        <begin position="183"/>
        <end position="201"/>
    </location>
</feature>
<feature type="transmembrane region" description="Helical" evidence="1">
    <location>
        <begin position="208"/>
        <end position="226"/>
    </location>
</feature>
<feature type="intramembrane region" description="Helical" evidence="1">
    <location>
        <begin position="242"/>
        <end position="254"/>
    </location>
</feature>
<feature type="intramembrane region" description="Helical" evidence="1">
    <location>
        <begin position="258"/>
        <end position="266"/>
    </location>
</feature>
<feature type="transmembrane region" description="Helical" evidence="1">
    <location>
        <begin position="278"/>
        <end position="298"/>
    </location>
</feature>
<feature type="transmembrane region" description="Helical" evidence="1">
    <location>
        <begin position="324"/>
        <end position="352"/>
    </location>
</feature>
<feature type="transmembrane region" description="Helical" evidence="1">
    <location>
        <begin position="361"/>
        <end position="380"/>
    </location>
</feature>
<feature type="transmembrane region" description="Helical" evidence="1">
    <location>
        <begin position="432"/>
        <end position="452"/>
    </location>
</feature>
<feature type="transmembrane region" description="Helical" evidence="1">
    <location>
        <begin position="460"/>
        <end position="483"/>
    </location>
</feature>
<feature type="intramembrane region" description="Helical" evidence="1">
    <location>
        <begin position="500"/>
        <end position="514"/>
    </location>
</feature>
<feature type="intramembrane region" description="Note=Loop between two helices" evidence="1">
    <location>
        <begin position="515"/>
        <end position="516"/>
    </location>
</feature>
<feature type="intramembrane region" description="Helical" evidence="1">
    <location>
        <begin position="517"/>
        <end position="528"/>
    </location>
</feature>
<feature type="intramembrane region" description="Note=Loop between two helices" evidence="1">
    <location>
        <begin position="529"/>
        <end position="533"/>
    </location>
</feature>
<feature type="transmembrane region" description="Helical" evidence="1">
    <location>
        <begin position="534"/>
        <end position="551"/>
    </location>
</feature>
<feature type="topological domain" description="Cytoplasmic" evidence="1">
    <location>
        <begin position="552"/>
        <end position="898"/>
    </location>
</feature>
<feature type="domain" description="CBS 1" evidence="7">
    <location>
        <begin position="587"/>
        <end position="645"/>
    </location>
</feature>
<feature type="domain" description="CBS 2" evidence="7">
    <location>
        <begin position="790"/>
        <end position="850"/>
    </location>
</feature>
<feature type="region of interest" description="Essential for channel gating by both voltage and cell volume" evidence="2">
    <location>
        <begin position="19"/>
        <end position="37"/>
    </location>
</feature>
<feature type="region of interest" description="Modulates channel gating by both voltage and cell volume" evidence="2">
    <location>
        <begin position="39"/>
        <end position="52"/>
    </location>
</feature>
<feature type="region of interest" description="Disordered" evidence="8">
    <location>
        <begin position="647"/>
        <end position="675"/>
    </location>
</feature>
<feature type="region of interest" description="Disordered" evidence="8">
    <location>
        <begin position="726"/>
        <end position="766"/>
    </location>
</feature>
<feature type="region of interest" description="Disordered" evidence="8">
    <location>
        <begin position="856"/>
        <end position="898"/>
    </location>
</feature>
<feature type="short sequence motif" description="Selectivity filter part_1" evidence="1">
    <location>
        <begin position="164"/>
        <end position="168"/>
    </location>
</feature>
<feature type="short sequence motif" description="Selectivity filter part_2" evidence="1">
    <location>
        <begin position="206"/>
        <end position="210"/>
    </location>
</feature>
<feature type="short sequence motif" description="Selectivity filter part_3" evidence="1">
    <location>
        <begin position="460"/>
        <end position="464"/>
    </location>
</feature>
<feature type="short sequence motif" description="Basolateral membrane sorting" evidence="3">
    <location>
        <begin position="812"/>
        <end position="813"/>
    </location>
</feature>
<feature type="compositionally biased region" description="Basic residues" evidence="8">
    <location>
        <begin position="647"/>
        <end position="658"/>
    </location>
</feature>
<feature type="compositionally biased region" description="Basic and acidic residues" evidence="8">
    <location>
        <begin position="737"/>
        <end position="746"/>
    </location>
</feature>
<feature type="site" description="Protopore gate" evidence="3">
    <location>
        <position position="208"/>
    </location>
</feature>
<feature type="site" description="Couples extracellular acidification to the channel closure" evidence="5">
    <location>
        <position position="533"/>
    </location>
</feature>
<feature type="modified residue" description="Phosphothreonine" evidence="4">
    <location>
        <position position="23"/>
    </location>
</feature>
<feature type="modified residue" description="Phosphoserine" evidence="3">
    <location>
        <position position="710"/>
    </location>
</feature>
<feature type="modified residue" description="Phosphoserine" evidence="2">
    <location>
        <position position="758"/>
    </location>
</feature>
<comment type="function">
    <text evidence="2 3 4">Voltage-gated and osmosensitive chloride channel. Forms a homodimeric channel where each subunit has its own ion conduction pathway. Conducts double-barreled currents controlled by two types of gates, two fast glutamate gates that control each subunit independently and a slow common gate that opens and shuts off both subunits simultaneously. Displays inward rectification currents activated upon membrane hyperpolarization and extracellular hypotonicity (By similarity). Contributes to chloride conductance involved in neuron excitability. In hippocampal neurons, generates a significant part of resting membrane conductance and provides an additional chloride efflux pathway to prevent chloride accumulation in dendrites upon GABA receptor activation. In glia, associates with the auxiliary subunit HEPACAM/GlialCAM at astrocytic processes and myelinated fiber tracts where it may regulate transcellular chloride flux buffering extracellular chloride and potassium concentrations (By similarity). Regulates aldosterone production in adrenal glands. The opening of CLCN2 channels at hyperpolarized membrane potentials in the glomerulosa causes cell membrane depolarization, activation of voltage-gated calcium channels and increased expression of aldosterone synthase, the rate-limiting enzyme for aldosterone biosynthesis (By similarity). Contributes to chloride conductance in retinal pigment epithelium involved in phagocytosis of shed photoreceptor outer segments and photoreceptor renewal (By similarity). Conducts chloride currents at the basolateral membrane of epithelial cells with a role in chloride reabsorption rather than secretion. Permeable to small monovalent anions with chloride &gt; thiocyanate &gt; bromide &gt; nitrate &gt; iodide ion selectivity (By similarity).</text>
</comment>
<comment type="catalytic activity">
    <reaction evidence="3">
        <text>chloride(in) = chloride(out)</text>
        <dbReference type="Rhea" id="RHEA:29823"/>
        <dbReference type="ChEBI" id="CHEBI:17996"/>
    </reaction>
</comment>
<comment type="catalytic activity">
    <reaction evidence="4">
        <text>thiocyanate(in) = thiocyanate(out)</text>
        <dbReference type="Rhea" id="RHEA:75347"/>
        <dbReference type="ChEBI" id="CHEBI:18022"/>
    </reaction>
</comment>
<comment type="catalytic activity">
    <reaction evidence="2 4">
        <text>bromide(in) = bromide(out)</text>
        <dbReference type="Rhea" id="RHEA:75383"/>
        <dbReference type="ChEBI" id="CHEBI:15858"/>
    </reaction>
</comment>
<comment type="catalytic activity">
    <reaction evidence="2">
        <text>nitrate(in) = nitrate(out)</text>
        <dbReference type="Rhea" id="RHEA:34923"/>
        <dbReference type="ChEBI" id="CHEBI:17632"/>
    </reaction>
</comment>
<comment type="catalytic activity">
    <reaction evidence="2 4">
        <text>iodide(out) = iodide(in)</text>
        <dbReference type="Rhea" id="RHEA:66324"/>
        <dbReference type="ChEBI" id="CHEBI:16382"/>
    </reaction>
</comment>
<comment type="activity regulation">
    <text evidence="2 3 4 5">Common gate kinetics are down-regulated by intracellular ATP. Inhibited by AK-42, a derivative of meclofenamate (By similarity). Inhibited by Cd(2+) (By similarity). Inhibited by Zn(2+) and PKC activation (By similarity). Inhibited at acidic pH (By similarity). CCLN2:HEPACAM channel conductance is up-regulated upon hypo-osmolarity (By similarity).</text>
</comment>
<comment type="subunit">
    <text evidence="3">Homodimer. Interacts with auxiliary subunit HEPACAM.</text>
</comment>
<comment type="subcellular location">
    <subcellularLocation>
        <location evidence="3">Cell membrane</location>
        <topology evidence="6">Multi-pass membrane protein</topology>
    </subcellularLocation>
    <subcellularLocation>
        <location evidence="3">Basolateral cell membrane</location>
        <topology evidence="6">Multi-pass membrane protein</topology>
    </subcellularLocation>
    <subcellularLocation>
        <location evidence="2">Cell projection</location>
        <location evidence="2">Dendritic spine membrane</location>
        <topology evidence="6">Multi-pass membrane protein</topology>
    </subcellularLocation>
    <subcellularLocation>
        <location evidence="2">Cell projection</location>
        <location evidence="2">Axon</location>
    </subcellularLocation>
    <text evidence="2 3 4">Sorting to the basolateral membrane is mediated by AP-1 clathrin adapter (By similarity). Localizes at axon initial segments and dendritic shaft and spikes. Colocalizes with HEPACAM and GFAP at astrocyte end-foot in contact with brain capillaries and other glial cells (By similarity).</text>
</comment>
<comment type="tissue specificity">
    <text>Ubiquitously expressed.</text>
</comment>
<comment type="PTM">
    <text evidence="2">Phosphorylated. Activated by dephosphorylation.</text>
</comment>
<comment type="similarity">
    <text evidence="9">Belongs to the chloride channel (TC 2.A.49) family. ClC-2/CLCN2 subfamily.</text>
</comment>
<accession>P51789</accession>
<dbReference type="EMBL" id="U15652">
    <property type="protein sequence ID" value="AAB05937.1"/>
    <property type="molecule type" value="mRNA"/>
</dbReference>
<dbReference type="RefSeq" id="NP_001076220.1">
    <property type="nucleotide sequence ID" value="NM_001082751.1"/>
</dbReference>
<dbReference type="SMR" id="P51789"/>
<dbReference type="FunCoup" id="P51789">
    <property type="interactions" value="23"/>
</dbReference>
<dbReference type="STRING" id="9986.ENSOCUP00000006115"/>
<dbReference type="PaxDb" id="9986-ENSOCUP00000006115"/>
<dbReference type="Ensembl" id="ENSOCUT00000007070.4">
    <property type="protein sequence ID" value="ENSOCUP00000006115.3"/>
    <property type="gene ID" value="ENSOCUG00000007065.4"/>
</dbReference>
<dbReference type="GeneID" id="100009530"/>
<dbReference type="KEGG" id="ocu:100009530"/>
<dbReference type="CTD" id="1181"/>
<dbReference type="eggNOG" id="KOG0476">
    <property type="taxonomic scope" value="Eukaryota"/>
</dbReference>
<dbReference type="GeneTree" id="ENSGT00940000155439"/>
<dbReference type="HOGENOM" id="CLU_006904_0_1_1"/>
<dbReference type="InParanoid" id="P51789"/>
<dbReference type="OMA" id="ACFMFNN"/>
<dbReference type="OrthoDB" id="4564at2759"/>
<dbReference type="Proteomes" id="UP000001811">
    <property type="component" value="Chromosome 14"/>
</dbReference>
<dbReference type="Bgee" id="ENSOCUG00000007065">
    <property type="expression patterns" value="Expressed in testis and 18 other cell types or tissues"/>
</dbReference>
<dbReference type="GO" id="GO:0097450">
    <property type="term" value="C:astrocyte end-foot"/>
    <property type="evidence" value="ECO:0007669"/>
    <property type="project" value="Ensembl"/>
</dbReference>
<dbReference type="GO" id="GO:0030424">
    <property type="term" value="C:axon"/>
    <property type="evidence" value="ECO:0007669"/>
    <property type="project" value="UniProtKB-SubCell"/>
</dbReference>
<dbReference type="GO" id="GO:0016323">
    <property type="term" value="C:basolateral plasma membrane"/>
    <property type="evidence" value="ECO:0007669"/>
    <property type="project" value="UniProtKB-SubCell"/>
</dbReference>
<dbReference type="GO" id="GO:0034707">
    <property type="term" value="C:chloride channel complex"/>
    <property type="evidence" value="ECO:0007669"/>
    <property type="project" value="UniProtKB-KW"/>
</dbReference>
<dbReference type="GO" id="GO:0032591">
    <property type="term" value="C:dendritic spine membrane"/>
    <property type="evidence" value="ECO:0007669"/>
    <property type="project" value="UniProtKB-SubCell"/>
</dbReference>
<dbReference type="GO" id="GO:0043209">
    <property type="term" value="C:myelin sheath"/>
    <property type="evidence" value="ECO:0007669"/>
    <property type="project" value="Ensembl"/>
</dbReference>
<dbReference type="GO" id="GO:0005886">
    <property type="term" value="C:plasma membrane"/>
    <property type="evidence" value="ECO:0000250"/>
    <property type="project" value="UniProtKB"/>
</dbReference>
<dbReference type="GO" id="GO:0045211">
    <property type="term" value="C:postsynaptic membrane"/>
    <property type="evidence" value="ECO:0007669"/>
    <property type="project" value="UniProtKB-KW"/>
</dbReference>
<dbReference type="GO" id="GO:0017081">
    <property type="term" value="F:chloride channel regulator activity"/>
    <property type="evidence" value="ECO:0007669"/>
    <property type="project" value="Ensembl"/>
</dbReference>
<dbReference type="GO" id="GO:0005247">
    <property type="term" value="F:voltage-gated chloride channel activity"/>
    <property type="evidence" value="ECO:0000250"/>
    <property type="project" value="UniProtKB"/>
</dbReference>
<dbReference type="GO" id="GO:0090425">
    <property type="term" value="P:acinar cell differentiation"/>
    <property type="evidence" value="ECO:0007669"/>
    <property type="project" value="Ensembl"/>
</dbReference>
<dbReference type="GO" id="GO:0060689">
    <property type="term" value="P:cell differentiation involved in salivary gland development"/>
    <property type="evidence" value="ECO:0007669"/>
    <property type="project" value="Ensembl"/>
</dbReference>
<dbReference type="GO" id="GO:0006911">
    <property type="term" value="P:phagocytosis, engulfment"/>
    <property type="evidence" value="ECO:0007669"/>
    <property type="project" value="Ensembl"/>
</dbReference>
<dbReference type="GO" id="GO:0032347">
    <property type="term" value="P:regulation of aldosterone biosynthetic process"/>
    <property type="evidence" value="ECO:0000250"/>
    <property type="project" value="UniProtKB"/>
</dbReference>
<dbReference type="GO" id="GO:0060075">
    <property type="term" value="P:regulation of resting membrane potential"/>
    <property type="evidence" value="ECO:0007669"/>
    <property type="project" value="Ensembl"/>
</dbReference>
<dbReference type="GO" id="GO:0060041">
    <property type="term" value="P:retina development in camera-type eye"/>
    <property type="evidence" value="ECO:0007669"/>
    <property type="project" value="Ensembl"/>
</dbReference>
<dbReference type="GO" id="GO:0030322">
    <property type="term" value="P:stabilization of membrane potential"/>
    <property type="evidence" value="ECO:0007669"/>
    <property type="project" value="Ensembl"/>
</dbReference>
<dbReference type="CDD" id="cd04591">
    <property type="entry name" value="CBS_pair_voltage-gated_CLC_euk_bac"/>
    <property type="match status" value="1"/>
</dbReference>
<dbReference type="CDD" id="cd03683">
    <property type="entry name" value="ClC_1_like"/>
    <property type="match status" value="1"/>
</dbReference>
<dbReference type="FunFam" id="1.10.3080.10:FF:000002">
    <property type="entry name" value="Chloride channel 2c"/>
    <property type="match status" value="1"/>
</dbReference>
<dbReference type="FunFam" id="3.10.580.10:FF:000024">
    <property type="entry name" value="Chloride channel 2c"/>
    <property type="match status" value="1"/>
</dbReference>
<dbReference type="FunFam" id="3.10.580.10:FF:000019">
    <property type="entry name" value="Chloride voltage-gated channel 2"/>
    <property type="match status" value="1"/>
</dbReference>
<dbReference type="Gene3D" id="3.10.580.10">
    <property type="entry name" value="CBS-domain"/>
    <property type="match status" value="2"/>
</dbReference>
<dbReference type="Gene3D" id="1.10.3080.10">
    <property type="entry name" value="Clc chloride channel"/>
    <property type="match status" value="1"/>
</dbReference>
<dbReference type="InterPro" id="IPR046342">
    <property type="entry name" value="CBS_dom_sf"/>
</dbReference>
<dbReference type="InterPro" id="IPR002244">
    <property type="entry name" value="Cl-channel-2"/>
</dbReference>
<dbReference type="InterPro" id="IPR014743">
    <property type="entry name" value="Cl-channel_core"/>
</dbReference>
<dbReference type="InterPro" id="IPR050970">
    <property type="entry name" value="Cl_channel_volt-gated"/>
</dbReference>
<dbReference type="InterPro" id="IPR001807">
    <property type="entry name" value="ClC"/>
</dbReference>
<dbReference type="PANTHER" id="PTHR45720">
    <property type="entry name" value="CHLORIDE CHANNEL PROTEIN 2"/>
    <property type="match status" value="1"/>
</dbReference>
<dbReference type="PANTHER" id="PTHR45720:SF6">
    <property type="entry name" value="CHLORIDE CHANNEL PROTEIN 2"/>
    <property type="match status" value="1"/>
</dbReference>
<dbReference type="Pfam" id="PF00654">
    <property type="entry name" value="Voltage_CLC"/>
    <property type="match status" value="1"/>
</dbReference>
<dbReference type="PRINTS" id="PR00762">
    <property type="entry name" value="CLCHANNEL"/>
</dbReference>
<dbReference type="PRINTS" id="PR01113">
    <property type="entry name" value="CLCHANNEL2"/>
</dbReference>
<dbReference type="SUPFAM" id="SSF54631">
    <property type="entry name" value="CBS-domain pair"/>
    <property type="match status" value="1"/>
</dbReference>
<dbReference type="SUPFAM" id="SSF81340">
    <property type="entry name" value="Clc chloride channel"/>
    <property type="match status" value="1"/>
</dbReference>
<dbReference type="PROSITE" id="PS51371">
    <property type="entry name" value="CBS"/>
    <property type="match status" value="2"/>
</dbReference>
<keyword id="KW-0129">CBS domain</keyword>
<keyword id="KW-1003">Cell membrane</keyword>
<keyword id="KW-0966">Cell projection</keyword>
<keyword id="KW-0868">Chloride</keyword>
<keyword id="KW-0869">Chloride channel</keyword>
<keyword id="KW-0407">Ion channel</keyword>
<keyword id="KW-0406">Ion transport</keyword>
<keyword id="KW-0472">Membrane</keyword>
<keyword id="KW-0597">Phosphoprotein</keyword>
<keyword id="KW-0628">Postsynaptic cell membrane</keyword>
<keyword id="KW-1185">Reference proteome</keyword>
<keyword id="KW-0677">Repeat</keyword>
<keyword id="KW-0770">Synapse</keyword>
<keyword id="KW-0812">Transmembrane</keyword>
<keyword id="KW-1133">Transmembrane helix</keyword>
<keyword id="KW-0813">Transport</keyword>
<keyword id="KW-0851">Voltage-gated channel</keyword>
<gene>
    <name type="primary">CLCN2</name>
</gene>
<sequence>MAAPAAAAVEEGMEPRALQYEQTLMYGRYTQDLGAFAKEEAARIRLGGPEPWRSPPSPRTPPELLEYGQSRCARCRMCSVRCHKFLVSRVGEDWIFLVLLGLLMALVSWAMDYAIAACLQAQQWMSRGLNTNLLLQYLAWVTYPVVLITFSAGFTQILAPQAVGSGIPEMKTILRGVVLKEYLTLKTFVAKVIGLTCALGSGMPLGKEGPFVHIASMCAALLSKFLSLFGGIYENESRNTEMLAAACAVGVGCCFAAPIGGVLFSIEVTSTFFAVRNYWRGFFAATFSAFIFRVLAVWNRDEETITALFKTRFRLDFPFDLQELPAFAVIGIASGFGGALFVYLNRKIVQVMRKQKTINRFLMRKRLLFPALVTLLISTLTFPPGFGQFMAGQLSQKETLVTLFDNRTWVRQGLVEELEPPSTSQAWSPPRANVFLTLVIFILMKFWMSALATTIPVPCGAFMPVFVIGAAFGRLVGESMAAWFPDGIHTDSSTYRIVPGGYAVVGAAALAGAVTHTVSTAVIVFELTGQIAHILPVMIAVILANAVAQSLQPSLYDSIIRIKKLPYLPELGWGRHQQYRVRVEDIMVRDVPHVALSCTFRDLRLALHRTKGRTLALVESPESMILLGSIERTQVVALLAAQLSPARRRQSKQKRRVAHTSPPSCQESPPSPETSVCFQVKAEDAQGEPHKPLKPALKRGCSNSVNLGESPTGHVESAGIALRSLFCGSPPPEAASESEKSESSEKRKSKRVRISLASDSDLEGEMSPEEILEWEEQQLDEPVNFSDCKIDPAPFQLVERTSLHKTHTIFSLLGVDHAYVTSIGRLIGIVTLKELRKAIEGSVTAQGVKVRPPLASFRDSATSSSDTETTEVHALWGPRSRHGLPREGSPSDSDDKCQ</sequence>
<name>CLCN2_RABIT</name>
<organism>
    <name type="scientific">Oryctolagus cuniculus</name>
    <name type="common">Rabbit</name>
    <dbReference type="NCBI Taxonomy" id="9986"/>
    <lineage>
        <taxon>Eukaryota</taxon>
        <taxon>Metazoa</taxon>
        <taxon>Chordata</taxon>
        <taxon>Craniata</taxon>
        <taxon>Vertebrata</taxon>
        <taxon>Euteleostomi</taxon>
        <taxon>Mammalia</taxon>
        <taxon>Eutheria</taxon>
        <taxon>Euarchontoglires</taxon>
        <taxon>Glires</taxon>
        <taxon>Lagomorpha</taxon>
        <taxon>Leporidae</taxon>
        <taxon>Oryctolagus</taxon>
    </lineage>
</organism>
<evidence type="ECO:0000250" key="1"/>
<evidence type="ECO:0000250" key="2">
    <source>
        <dbReference type="UniProtKB" id="P35525"/>
    </source>
</evidence>
<evidence type="ECO:0000250" key="3">
    <source>
        <dbReference type="UniProtKB" id="P51788"/>
    </source>
</evidence>
<evidence type="ECO:0000250" key="4">
    <source>
        <dbReference type="UniProtKB" id="Q9R0A1"/>
    </source>
</evidence>
<evidence type="ECO:0000250" key="5">
    <source>
        <dbReference type="UniProtKB" id="Q9WU45"/>
    </source>
</evidence>
<evidence type="ECO:0000255" key="6"/>
<evidence type="ECO:0000255" key="7">
    <source>
        <dbReference type="PROSITE-ProRule" id="PRU00703"/>
    </source>
</evidence>
<evidence type="ECO:0000256" key="8">
    <source>
        <dbReference type="SAM" id="MobiDB-lite"/>
    </source>
</evidence>
<evidence type="ECO:0000305" key="9"/>